<sequence length="425" mass="49068">MQFENTREFAKKLDNEDKISKYRDEFIFPKVNGKDVIYFVGNSLGLQPKTARKYVDEVMKDWAELAVEGHFYAEKSWWDYHERFSEKLARVVGANPSEVTVMNTLTVNLHLLMVSFYRPSGKRYKIICEEKAFPSDQYMISSQVRFHGYEPSDAIVEIMKREGENNFRTEDILKKIEEVGEECALVLIGGVNYYTGQVFDMETITKAGHDIGAFVGWDLAHGAGNIELKLSEWNVDFAAWCSYKYMNSGPGNASGCFINKKYHNKKDIPRFEGWWGHNKERRFLMEPEFQPEPTADAWQISNAPILALAPYLASLEMFDEVGMPALIEKRNKIVAYLEFVLHEIDEEVDSSFEIITPADQNERGTQLSVFLHGEGKELFRYLMDQGVITDWREPNVIRLAPAPFYCSFEDMYEFGQILKKGILSK</sequence>
<accession>A0M4Y1</accession>
<evidence type="ECO:0000255" key="1">
    <source>
        <dbReference type="HAMAP-Rule" id="MF_01970"/>
    </source>
</evidence>
<feature type="chain" id="PRO_0000357008" description="Kynureninase">
    <location>
        <begin position="1"/>
        <end position="425"/>
    </location>
</feature>
<feature type="binding site" evidence="1">
    <location>
        <position position="105"/>
    </location>
    <ligand>
        <name>pyridoxal 5'-phosphate</name>
        <dbReference type="ChEBI" id="CHEBI:597326"/>
    </ligand>
</feature>
<feature type="binding site" evidence="1">
    <location>
        <position position="106"/>
    </location>
    <ligand>
        <name>pyridoxal 5'-phosphate</name>
        <dbReference type="ChEBI" id="CHEBI:597326"/>
    </ligand>
</feature>
<feature type="binding site" evidence="1">
    <location>
        <begin position="133"/>
        <end position="136"/>
    </location>
    <ligand>
        <name>pyridoxal 5'-phosphate</name>
        <dbReference type="ChEBI" id="CHEBI:597326"/>
    </ligand>
</feature>
<feature type="binding site" evidence="1">
    <location>
        <position position="218"/>
    </location>
    <ligand>
        <name>pyridoxal 5'-phosphate</name>
        <dbReference type="ChEBI" id="CHEBI:597326"/>
    </ligand>
</feature>
<feature type="binding site" evidence="1">
    <location>
        <position position="221"/>
    </location>
    <ligand>
        <name>pyridoxal 5'-phosphate</name>
        <dbReference type="ChEBI" id="CHEBI:597326"/>
    </ligand>
</feature>
<feature type="binding site" evidence="1">
    <location>
        <position position="243"/>
    </location>
    <ligand>
        <name>pyridoxal 5'-phosphate</name>
        <dbReference type="ChEBI" id="CHEBI:597326"/>
    </ligand>
</feature>
<feature type="binding site" evidence="1">
    <location>
        <position position="274"/>
    </location>
    <ligand>
        <name>pyridoxal 5'-phosphate</name>
        <dbReference type="ChEBI" id="CHEBI:597326"/>
    </ligand>
</feature>
<feature type="binding site" evidence="1">
    <location>
        <position position="302"/>
    </location>
    <ligand>
        <name>pyridoxal 5'-phosphate</name>
        <dbReference type="ChEBI" id="CHEBI:597326"/>
    </ligand>
</feature>
<feature type="modified residue" description="N6-(pyridoxal phosphate)lysine" evidence="1">
    <location>
        <position position="244"/>
    </location>
</feature>
<proteinExistence type="inferred from homology"/>
<comment type="function">
    <text evidence="1">Catalyzes the cleavage of L-kynurenine (L-Kyn) and L-3-hydroxykynurenine (L-3OHKyn) into anthranilic acid (AA) and 3-hydroxyanthranilic acid (3-OHAA), respectively.</text>
</comment>
<comment type="catalytic activity">
    <reaction evidence="1">
        <text>L-kynurenine + H2O = anthranilate + L-alanine + H(+)</text>
        <dbReference type="Rhea" id="RHEA:16813"/>
        <dbReference type="ChEBI" id="CHEBI:15377"/>
        <dbReference type="ChEBI" id="CHEBI:15378"/>
        <dbReference type="ChEBI" id="CHEBI:16567"/>
        <dbReference type="ChEBI" id="CHEBI:57959"/>
        <dbReference type="ChEBI" id="CHEBI:57972"/>
        <dbReference type="EC" id="3.7.1.3"/>
    </reaction>
</comment>
<comment type="catalytic activity">
    <reaction evidence="1">
        <text>3-hydroxy-L-kynurenine + H2O = 3-hydroxyanthranilate + L-alanine + H(+)</text>
        <dbReference type="Rhea" id="RHEA:25143"/>
        <dbReference type="ChEBI" id="CHEBI:15377"/>
        <dbReference type="ChEBI" id="CHEBI:15378"/>
        <dbReference type="ChEBI" id="CHEBI:36559"/>
        <dbReference type="ChEBI" id="CHEBI:57972"/>
        <dbReference type="ChEBI" id="CHEBI:58125"/>
        <dbReference type="EC" id="3.7.1.3"/>
    </reaction>
</comment>
<comment type="cofactor">
    <cofactor evidence="1">
        <name>pyridoxal 5'-phosphate</name>
        <dbReference type="ChEBI" id="CHEBI:597326"/>
    </cofactor>
</comment>
<comment type="pathway">
    <text evidence="1">Amino-acid degradation; L-kynurenine degradation; L-alanine and anthranilate from L-kynurenine: step 1/1.</text>
</comment>
<comment type="pathway">
    <text evidence="1">Cofactor biosynthesis; NAD(+) biosynthesis; quinolinate from L-kynurenine: step 2/3.</text>
</comment>
<comment type="subunit">
    <text evidence="1">Homodimer.</text>
</comment>
<comment type="similarity">
    <text evidence="1">Belongs to the kynureninase family.</text>
</comment>
<organism>
    <name type="scientific">Christiangramia forsetii (strain DSM 17595 / CGMCC 1.15422 / KT0803)</name>
    <name type="common">Gramella forsetii</name>
    <dbReference type="NCBI Taxonomy" id="411154"/>
    <lineage>
        <taxon>Bacteria</taxon>
        <taxon>Pseudomonadati</taxon>
        <taxon>Bacteroidota</taxon>
        <taxon>Flavobacteriia</taxon>
        <taxon>Flavobacteriales</taxon>
        <taxon>Flavobacteriaceae</taxon>
        <taxon>Christiangramia</taxon>
    </lineage>
</organism>
<protein>
    <recommendedName>
        <fullName evidence="1">Kynureninase</fullName>
        <ecNumber evidence="1">3.7.1.3</ecNumber>
    </recommendedName>
    <alternativeName>
        <fullName evidence="1">L-kynurenine hydrolase</fullName>
    </alternativeName>
</protein>
<gene>
    <name evidence="1" type="primary">kynU</name>
    <name type="ordered locus">GFO_2720</name>
</gene>
<keyword id="KW-0378">Hydrolase</keyword>
<keyword id="KW-0662">Pyridine nucleotide biosynthesis</keyword>
<keyword id="KW-0663">Pyridoxal phosphate</keyword>
<dbReference type="EC" id="3.7.1.3" evidence="1"/>
<dbReference type="EMBL" id="CU207366">
    <property type="protein sequence ID" value="CAL67676.1"/>
    <property type="molecule type" value="Genomic_DNA"/>
</dbReference>
<dbReference type="RefSeq" id="WP_011710579.1">
    <property type="nucleotide sequence ID" value="NC_008571.1"/>
</dbReference>
<dbReference type="SMR" id="A0M4Y1"/>
<dbReference type="STRING" id="411154.GFO_2720"/>
<dbReference type="KEGG" id="gfo:GFO_2720"/>
<dbReference type="eggNOG" id="COG3844">
    <property type="taxonomic scope" value="Bacteria"/>
</dbReference>
<dbReference type="HOGENOM" id="CLU_003433_4_0_10"/>
<dbReference type="OrthoDB" id="9812626at2"/>
<dbReference type="UniPathway" id="UPA00253">
    <property type="reaction ID" value="UER00329"/>
</dbReference>
<dbReference type="UniPathway" id="UPA00334">
    <property type="reaction ID" value="UER00455"/>
</dbReference>
<dbReference type="Proteomes" id="UP000000755">
    <property type="component" value="Chromosome"/>
</dbReference>
<dbReference type="GO" id="GO:0005737">
    <property type="term" value="C:cytoplasm"/>
    <property type="evidence" value="ECO:0007669"/>
    <property type="project" value="InterPro"/>
</dbReference>
<dbReference type="GO" id="GO:0030429">
    <property type="term" value="F:kynureninase activity"/>
    <property type="evidence" value="ECO:0007669"/>
    <property type="project" value="UniProtKB-UniRule"/>
</dbReference>
<dbReference type="GO" id="GO:0030170">
    <property type="term" value="F:pyridoxal phosphate binding"/>
    <property type="evidence" value="ECO:0007669"/>
    <property type="project" value="UniProtKB-UniRule"/>
</dbReference>
<dbReference type="GO" id="GO:0043420">
    <property type="term" value="P:anthranilate metabolic process"/>
    <property type="evidence" value="ECO:0007669"/>
    <property type="project" value="TreeGrafter"/>
</dbReference>
<dbReference type="GO" id="GO:0097053">
    <property type="term" value="P:L-kynurenine catabolic process"/>
    <property type="evidence" value="ECO:0007669"/>
    <property type="project" value="UniProtKB-UniRule"/>
</dbReference>
<dbReference type="GO" id="GO:0019441">
    <property type="term" value="P:L-tryptophan catabolic process to kynurenine"/>
    <property type="evidence" value="ECO:0007669"/>
    <property type="project" value="TreeGrafter"/>
</dbReference>
<dbReference type="GO" id="GO:0009435">
    <property type="term" value="P:NAD biosynthetic process"/>
    <property type="evidence" value="ECO:0007669"/>
    <property type="project" value="UniProtKB-UniPathway"/>
</dbReference>
<dbReference type="GO" id="GO:0019805">
    <property type="term" value="P:quinolinate biosynthetic process"/>
    <property type="evidence" value="ECO:0007669"/>
    <property type="project" value="UniProtKB-UniRule"/>
</dbReference>
<dbReference type="FunFam" id="3.40.640.10:FF:000031">
    <property type="entry name" value="Kynureninase"/>
    <property type="match status" value="1"/>
</dbReference>
<dbReference type="Gene3D" id="3.90.1150.10">
    <property type="entry name" value="Aspartate Aminotransferase, domain 1"/>
    <property type="match status" value="1"/>
</dbReference>
<dbReference type="Gene3D" id="3.40.640.10">
    <property type="entry name" value="Type I PLP-dependent aspartate aminotransferase-like (Major domain)"/>
    <property type="match status" value="1"/>
</dbReference>
<dbReference type="HAMAP" id="MF_01970">
    <property type="entry name" value="Kynureninase"/>
    <property type="match status" value="1"/>
</dbReference>
<dbReference type="InterPro" id="IPR010111">
    <property type="entry name" value="Kynureninase"/>
</dbReference>
<dbReference type="InterPro" id="IPR015424">
    <property type="entry name" value="PyrdxlP-dep_Trfase"/>
</dbReference>
<dbReference type="InterPro" id="IPR015421">
    <property type="entry name" value="PyrdxlP-dep_Trfase_major"/>
</dbReference>
<dbReference type="InterPro" id="IPR015422">
    <property type="entry name" value="PyrdxlP-dep_Trfase_small"/>
</dbReference>
<dbReference type="NCBIfam" id="TIGR01814">
    <property type="entry name" value="kynureninase"/>
    <property type="match status" value="1"/>
</dbReference>
<dbReference type="PANTHER" id="PTHR14084">
    <property type="entry name" value="KYNURENINASE"/>
    <property type="match status" value="1"/>
</dbReference>
<dbReference type="PANTHER" id="PTHR14084:SF0">
    <property type="entry name" value="KYNURENINASE"/>
    <property type="match status" value="1"/>
</dbReference>
<dbReference type="Pfam" id="PF22580">
    <property type="entry name" value="KYNU_C"/>
    <property type="match status" value="1"/>
</dbReference>
<dbReference type="PIRSF" id="PIRSF038800">
    <property type="entry name" value="KYNU"/>
    <property type="match status" value="1"/>
</dbReference>
<dbReference type="SUPFAM" id="SSF53383">
    <property type="entry name" value="PLP-dependent transferases"/>
    <property type="match status" value="1"/>
</dbReference>
<reference key="1">
    <citation type="journal article" date="2006" name="Environ. Microbiol.">
        <title>Whole genome analysis of the marine Bacteroidetes'Gramella forsetii' reveals adaptations to degradation of polymeric organic matter.</title>
        <authorList>
            <person name="Bauer M."/>
            <person name="Kube M."/>
            <person name="Teeling H."/>
            <person name="Richter M."/>
            <person name="Lombardot T."/>
            <person name="Allers E."/>
            <person name="Wuerdemann C.A."/>
            <person name="Quast C."/>
            <person name="Kuhl H."/>
            <person name="Knaust F."/>
            <person name="Woebken D."/>
            <person name="Bischof K."/>
            <person name="Mussmann M."/>
            <person name="Choudhuri J.V."/>
            <person name="Meyer F."/>
            <person name="Reinhardt R."/>
            <person name="Amann R.I."/>
            <person name="Gloeckner F.O."/>
        </authorList>
    </citation>
    <scope>NUCLEOTIDE SEQUENCE [LARGE SCALE GENOMIC DNA]</scope>
    <source>
        <strain>DSM 17595 / CGMCC 1.15422 / KT0803</strain>
    </source>
</reference>
<name>KYNU_CHRFK</name>